<gene>
    <name type="primary">PER19</name>
    <name type="synonym">P19</name>
    <name type="ordered locus">At2g34060</name>
    <name type="ORF">T14G11.18</name>
</gene>
<organism>
    <name type="scientific">Arabidopsis thaliana</name>
    <name type="common">Mouse-ear cress</name>
    <dbReference type="NCBI Taxonomy" id="3702"/>
    <lineage>
        <taxon>Eukaryota</taxon>
        <taxon>Viridiplantae</taxon>
        <taxon>Streptophyta</taxon>
        <taxon>Embryophyta</taxon>
        <taxon>Tracheophyta</taxon>
        <taxon>Spermatophyta</taxon>
        <taxon>Magnoliopsida</taxon>
        <taxon>eudicotyledons</taxon>
        <taxon>Gunneridae</taxon>
        <taxon>Pentapetalae</taxon>
        <taxon>rosids</taxon>
        <taxon>malvids</taxon>
        <taxon>Brassicales</taxon>
        <taxon>Brassicaceae</taxon>
        <taxon>Camelineae</taxon>
        <taxon>Arabidopsis</taxon>
    </lineage>
</organism>
<accession>O22959</accession>
<accession>Q8RXZ2</accession>
<reference key="1">
    <citation type="journal article" date="1999" name="Nature">
        <title>Sequence and analysis of chromosome 2 of the plant Arabidopsis thaliana.</title>
        <authorList>
            <person name="Lin X."/>
            <person name="Kaul S."/>
            <person name="Rounsley S.D."/>
            <person name="Shea T.P."/>
            <person name="Benito M.-I."/>
            <person name="Town C.D."/>
            <person name="Fujii C.Y."/>
            <person name="Mason T.M."/>
            <person name="Bowman C.L."/>
            <person name="Barnstead M.E."/>
            <person name="Feldblyum T.V."/>
            <person name="Buell C.R."/>
            <person name="Ketchum K.A."/>
            <person name="Lee J.J."/>
            <person name="Ronning C.M."/>
            <person name="Koo H.L."/>
            <person name="Moffat K.S."/>
            <person name="Cronin L.A."/>
            <person name="Shen M."/>
            <person name="Pai G."/>
            <person name="Van Aken S."/>
            <person name="Umayam L."/>
            <person name="Tallon L.J."/>
            <person name="Gill J.E."/>
            <person name="Adams M.D."/>
            <person name="Carrera A.J."/>
            <person name="Creasy T.H."/>
            <person name="Goodman H.M."/>
            <person name="Somerville C.R."/>
            <person name="Copenhaver G.P."/>
            <person name="Preuss D."/>
            <person name="Nierman W.C."/>
            <person name="White O."/>
            <person name="Eisen J.A."/>
            <person name="Salzberg S.L."/>
            <person name="Fraser C.M."/>
            <person name="Venter J.C."/>
        </authorList>
    </citation>
    <scope>NUCLEOTIDE SEQUENCE [LARGE SCALE GENOMIC DNA]</scope>
    <source>
        <strain>cv. Columbia</strain>
    </source>
</reference>
<reference key="2">
    <citation type="journal article" date="2017" name="Plant J.">
        <title>Araport11: a complete reannotation of the Arabidopsis thaliana reference genome.</title>
        <authorList>
            <person name="Cheng C.Y."/>
            <person name="Krishnakumar V."/>
            <person name="Chan A.P."/>
            <person name="Thibaud-Nissen F."/>
            <person name="Schobel S."/>
            <person name="Town C.D."/>
        </authorList>
    </citation>
    <scope>GENOME REANNOTATION</scope>
    <source>
        <strain>cv. Columbia</strain>
    </source>
</reference>
<reference key="3">
    <citation type="journal article" date="2003" name="Science">
        <title>Empirical analysis of transcriptional activity in the Arabidopsis genome.</title>
        <authorList>
            <person name="Yamada K."/>
            <person name="Lim J."/>
            <person name="Dale J.M."/>
            <person name="Chen H."/>
            <person name="Shinn P."/>
            <person name="Palm C.J."/>
            <person name="Southwick A.M."/>
            <person name="Wu H.C."/>
            <person name="Kim C.J."/>
            <person name="Nguyen M."/>
            <person name="Pham P.K."/>
            <person name="Cheuk R.F."/>
            <person name="Karlin-Newmann G."/>
            <person name="Liu S.X."/>
            <person name="Lam B."/>
            <person name="Sakano H."/>
            <person name="Wu T."/>
            <person name="Yu G."/>
            <person name="Miranda M."/>
            <person name="Quach H.L."/>
            <person name="Tripp M."/>
            <person name="Chang C.H."/>
            <person name="Lee J.M."/>
            <person name="Toriumi M.J."/>
            <person name="Chan M.M."/>
            <person name="Tang C.C."/>
            <person name="Onodera C.S."/>
            <person name="Deng J.M."/>
            <person name="Akiyama K."/>
            <person name="Ansari Y."/>
            <person name="Arakawa T."/>
            <person name="Banh J."/>
            <person name="Banno F."/>
            <person name="Bowser L."/>
            <person name="Brooks S.Y."/>
            <person name="Carninci P."/>
            <person name="Chao Q."/>
            <person name="Choy N."/>
            <person name="Enju A."/>
            <person name="Goldsmith A.D."/>
            <person name="Gurjal M."/>
            <person name="Hansen N.F."/>
            <person name="Hayashizaki Y."/>
            <person name="Johnson-Hopson C."/>
            <person name="Hsuan V.W."/>
            <person name="Iida K."/>
            <person name="Karnes M."/>
            <person name="Khan S."/>
            <person name="Koesema E."/>
            <person name="Ishida J."/>
            <person name="Jiang P.X."/>
            <person name="Jones T."/>
            <person name="Kawai J."/>
            <person name="Kamiya A."/>
            <person name="Meyers C."/>
            <person name="Nakajima M."/>
            <person name="Narusaka M."/>
            <person name="Seki M."/>
            <person name="Sakurai T."/>
            <person name="Satou M."/>
            <person name="Tamse R."/>
            <person name="Vaysberg M."/>
            <person name="Wallender E.K."/>
            <person name="Wong C."/>
            <person name="Yamamura Y."/>
            <person name="Yuan S."/>
            <person name="Shinozaki K."/>
            <person name="Davis R.W."/>
            <person name="Theologis A."/>
            <person name="Ecker J.R."/>
        </authorList>
    </citation>
    <scope>NUCLEOTIDE SEQUENCE [LARGE SCALE MRNA]</scope>
    <source>
        <strain>cv. Columbia</strain>
    </source>
</reference>
<reference key="4">
    <citation type="journal article" date="2002" name="Gene">
        <title>Analysis and expression of the class III peroxidase large gene family in Arabidopsis thaliana.</title>
        <authorList>
            <person name="Tognolli M."/>
            <person name="Penel C."/>
            <person name="Greppin H."/>
            <person name="Simon P."/>
        </authorList>
    </citation>
    <scope>GENE FAMILY ORGANIZATION</scope>
    <scope>NOMENCLATURE</scope>
    <source>
        <strain>cv. Columbia</strain>
    </source>
</reference>
<feature type="signal peptide" evidence="1">
    <location>
        <begin position="1"/>
        <end position="31"/>
    </location>
</feature>
<feature type="chain" id="PRO_0000023685" description="Peroxidase 19">
    <location>
        <begin position="32"/>
        <end position="346"/>
    </location>
</feature>
<feature type="active site" description="Proton acceptor" evidence="2 3">
    <location>
        <position position="82"/>
    </location>
</feature>
<feature type="binding site" evidence="2">
    <location>
        <position position="83"/>
    </location>
    <ligand>
        <name>Ca(2+)</name>
        <dbReference type="ChEBI" id="CHEBI:29108"/>
        <label>1</label>
    </ligand>
</feature>
<feature type="binding site" evidence="2">
    <location>
        <position position="86"/>
    </location>
    <ligand>
        <name>Ca(2+)</name>
        <dbReference type="ChEBI" id="CHEBI:29108"/>
        <label>1</label>
    </ligand>
</feature>
<feature type="binding site" evidence="2">
    <location>
        <position position="88"/>
    </location>
    <ligand>
        <name>Ca(2+)</name>
        <dbReference type="ChEBI" id="CHEBI:29108"/>
        <label>1</label>
    </ligand>
</feature>
<feature type="binding site" evidence="2">
    <location>
        <position position="90"/>
    </location>
    <ligand>
        <name>Ca(2+)</name>
        <dbReference type="ChEBI" id="CHEBI:29108"/>
        <label>1</label>
    </ligand>
</feature>
<feature type="binding site" evidence="2">
    <location>
        <position position="92"/>
    </location>
    <ligand>
        <name>Ca(2+)</name>
        <dbReference type="ChEBI" id="CHEBI:29108"/>
        <label>1</label>
    </ligand>
</feature>
<feature type="binding site" evidence="2">
    <location>
        <position position="182"/>
    </location>
    <ligand>
        <name>substrate</name>
    </ligand>
</feature>
<feature type="binding site" description="axial binding residue" evidence="2">
    <location>
        <position position="212"/>
    </location>
    <ligand>
        <name>heme b</name>
        <dbReference type="ChEBI" id="CHEBI:60344"/>
    </ligand>
    <ligandPart>
        <name>Fe</name>
        <dbReference type="ChEBI" id="CHEBI:18248"/>
    </ligandPart>
</feature>
<feature type="binding site" evidence="2">
    <location>
        <position position="213"/>
    </location>
    <ligand>
        <name>Ca(2+)</name>
        <dbReference type="ChEBI" id="CHEBI:29108"/>
        <label>2</label>
    </ligand>
</feature>
<feature type="binding site" evidence="2">
    <location>
        <position position="265"/>
    </location>
    <ligand>
        <name>Ca(2+)</name>
        <dbReference type="ChEBI" id="CHEBI:29108"/>
        <label>2</label>
    </ligand>
</feature>
<feature type="binding site" evidence="2">
    <location>
        <position position="268"/>
    </location>
    <ligand>
        <name>Ca(2+)</name>
        <dbReference type="ChEBI" id="CHEBI:29108"/>
        <label>2</label>
    </ligand>
</feature>
<feature type="binding site" evidence="2">
    <location>
        <position position="273"/>
    </location>
    <ligand>
        <name>Ca(2+)</name>
        <dbReference type="ChEBI" id="CHEBI:29108"/>
        <label>2</label>
    </ligand>
</feature>
<feature type="site" description="Transition state stabilizer" evidence="2">
    <location>
        <position position="78"/>
    </location>
</feature>
<feature type="glycosylation site" description="N-linked (GlcNAc...) asparagine" evidence="1">
    <location>
        <position position="185"/>
    </location>
</feature>
<feature type="disulfide bond" evidence="2">
    <location>
        <begin position="51"/>
        <end position="134"/>
    </location>
</feature>
<feature type="disulfide bond" evidence="2">
    <location>
        <begin position="84"/>
        <end position="89"/>
    </location>
</feature>
<feature type="disulfide bond" evidence="2">
    <location>
        <begin position="140"/>
        <end position="342"/>
    </location>
</feature>
<feature type="disulfide bond" evidence="2">
    <location>
        <begin position="219"/>
        <end position="251"/>
    </location>
</feature>
<comment type="function">
    <text>Removal of H(2)O(2), oxidation of toxic reductants, biosynthesis and degradation of lignin, suberization, auxin catabolism, response to environmental stresses such as wounding, pathogen attack and oxidative stress. These functions might be dependent on each isozyme/isoform in each plant tissue.</text>
</comment>
<comment type="catalytic activity">
    <reaction>
        <text>2 a phenolic donor + H2O2 = 2 a phenolic radical donor + 2 H2O</text>
        <dbReference type="Rhea" id="RHEA:56136"/>
        <dbReference type="ChEBI" id="CHEBI:15377"/>
        <dbReference type="ChEBI" id="CHEBI:16240"/>
        <dbReference type="ChEBI" id="CHEBI:139520"/>
        <dbReference type="ChEBI" id="CHEBI:139521"/>
        <dbReference type="EC" id="1.11.1.7"/>
    </reaction>
</comment>
<comment type="cofactor">
    <cofactor evidence="2">
        <name>heme b</name>
        <dbReference type="ChEBI" id="CHEBI:60344"/>
    </cofactor>
    <text evidence="2">Binds 1 heme b (iron(II)-protoporphyrin IX) group per subunit.</text>
</comment>
<comment type="cofactor">
    <cofactor evidence="2">
        <name>Ca(2+)</name>
        <dbReference type="ChEBI" id="CHEBI:29108"/>
    </cofactor>
    <text evidence="2">Binds 2 calcium ions per subunit.</text>
</comment>
<comment type="subcellular location">
    <subcellularLocation>
        <location evidence="2">Secreted</location>
    </subcellularLocation>
</comment>
<comment type="miscellaneous">
    <text>There are 73 peroxidase genes in A.thaliana.</text>
</comment>
<comment type="similarity">
    <text evidence="2">Belongs to the peroxidase family. Classical plant (class III) peroxidase subfamily.</text>
</comment>
<protein>
    <recommendedName>
        <fullName>Peroxidase 19</fullName>
        <shortName>Atperox P19</shortName>
        <ecNumber>1.11.1.7</ecNumber>
    </recommendedName>
    <alternativeName>
        <fullName>ATP51</fullName>
    </alternativeName>
</protein>
<dbReference type="EC" id="1.11.1.7"/>
<dbReference type="EMBL" id="AC002341">
    <property type="protein sequence ID" value="AAB67624.1"/>
    <property type="molecule type" value="Genomic_DNA"/>
</dbReference>
<dbReference type="EMBL" id="CP002685">
    <property type="protein sequence ID" value="AEC08912.1"/>
    <property type="molecule type" value="Genomic_DNA"/>
</dbReference>
<dbReference type="EMBL" id="AY080602">
    <property type="protein sequence ID" value="AAL86286.1"/>
    <property type="molecule type" value="mRNA"/>
</dbReference>
<dbReference type="EMBL" id="BT002341">
    <property type="protein sequence ID" value="AAN86174.1"/>
    <property type="molecule type" value="mRNA"/>
</dbReference>
<dbReference type="PIR" id="H84751">
    <property type="entry name" value="H84751"/>
</dbReference>
<dbReference type="RefSeq" id="NP_180953.1">
    <property type="nucleotide sequence ID" value="NM_128957.4"/>
</dbReference>
<dbReference type="SMR" id="O22959"/>
<dbReference type="FunCoup" id="O22959">
    <property type="interactions" value="129"/>
</dbReference>
<dbReference type="STRING" id="3702.O22959"/>
<dbReference type="PeroxiBase" id="100">
    <property type="entry name" value="AtPrx19"/>
</dbReference>
<dbReference type="GlyCosmos" id="O22959">
    <property type="glycosylation" value="1 site, No reported glycans"/>
</dbReference>
<dbReference type="GlyGen" id="O22959">
    <property type="glycosylation" value="2 sites"/>
</dbReference>
<dbReference type="iPTMnet" id="O22959"/>
<dbReference type="PaxDb" id="3702-AT2G34060.1"/>
<dbReference type="ProteomicsDB" id="234824"/>
<dbReference type="EnsemblPlants" id="AT2G34060.1">
    <property type="protein sequence ID" value="AT2G34060.1"/>
    <property type="gene ID" value="AT2G34060"/>
</dbReference>
<dbReference type="GeneID" id="817967"/>
<dbReference type="Gramene" id="AT2G34060.1">
    <property type="protein sequence ID" value="AT2G34060.1"/>
    <property type="gene ID" value="AT2G34060"/>
</dbReference>
<dbReference type="KEGG" id="ath:AT2G34060"/>
<dbReference type="Araport" id="AT2G34060"/>
<dbReference type="TAIR" id="AT2G34060"/>
<dbReference type="eggNOG" id="ENOG502QQ3G">
    <property type="taxonomic scope" value="Eukaryota"/>
</dbReference>
<dbReference type="HOGENOM" id="CLU_010543_0_3_1"/>
<dbReference type="InParanoid" id="O22959"/>
<dbReference type="OMA" id="RRDCSMH"/>
<dbReference type="OrthoDB" id="2113341at2759"/>
<dbReference type="PhylomeDB" id="O22959"/>
<dbReference type="BioCyc" id="ARA:AT2G34060-MONOMER"/>
<dbReference type="PRO" id="PR:O22959"/>
<dbReference type="Proteomes" id="UP000006548">
    <property type="component" value="Chromosome 2"/>
</dbReference>
<dbReference type="ExpressionAtlas" id="O22959">
    <property type="expression patterns" value="baseline and differential"/>
</dbReference>
<dbReference type="GO" id="GO:0005576">
    <property type="term" value="C:extracellular region"/>
    <property type="evidence" value="ECO:0007669"/>
    <property type="project" value="UniProtKB-SubCell"/>
</dbReference>
<dbReference type="GO" id="GO:0020037">
    <property type="term" value="F:heme binding"/>
    <property type="evidence" value="ECO:0007669"/>
    <property type="project" value="InterPro"/>
</dbReference>
<dbReference type="GO" id="GO:0140825">
    <property type="term" value="F:lactoperoxidase activity"/>
    <property type="evidence" value="ECO:0007669"/>
    <property type="project" value="UniProtKB-EC"/>
</dbReference>
<dbReference type="GO" id="GO:0046872">
    <property type="term" value="F:metal ion binding"/>
    <property type="evidence" value="ECO:0007669"/>
    <property type="project" value="UniProtKB-KW"/>
</dbReference>
<dbReference type="GO" id="GO:0042744">
    <property type="term" value="P:hydrogen peroxide catabolic process"/>
    <property type="evidence" value="ECO:0007669"/>
    <property type="project" value="UniProtKB-KW"/>
</dbReference>
<dbReference type="GO" id="GO:0006979">
    <property type="term" value="P:response to oxidative stress"/>
    <property type="evidence" value="ECO:0007669"/>
    <property type="project" value="InterPro"/>
</dbReference>
<dbReference type="CDD" id="cd00693">
    <property type="entry name" value="secretory_peroxidase"/>
    <property type="match status" value="1"/>
</dbReference>
<dbReference type="FunFam" id="1.10.420.10:FF:000001">
    <property type="entry name" value="Peroxidase"/>
    <property type="match status" value="1"/>
</dbReference>
<dbReference type="FunFam" id="1.10.520.10:FF:000008">
    <property type="entry name" value="Peroxidase"/>
    <property type="match status" value="1"/>
</dbReference>
<dbReference type="Gene3D" id="1.10.520.10">
    <property type="match status" value="1"/>
</dbReference>
<dbReference type="Gene3D" id="1.10.420.10">
    <property type="entry name" value="Peroxidase, domain 2"/>
    <property type="match status" value="1"/>
</dbReference>
<dbReference type="InterPro" id="IPR002016">
    <property type="entry name" value="Haem_peroxidase"/>
</dbReference>
<dbReference type="InterPro" id="IPR010255">
    <property type="entry name" value="Haem_peroxidase_sf"/>
</dbReference>
<dbReference type="InterPro" id="IPR000823">
    <property type="entry name" value="Peroxidase_pln"/>
</dbReference>
<dbReference type="InterPro" id="IPR019794">
    <property type="entry name" value="Peroxidases_AS"/>
</dbReference>
<dbReference type="InterPro" id="IPR019793">
    <property type="entry name" value="Peroxidases_heam-ligand_BS"/>
</dbReference>
<dbReference type="InterPro" id="IPR033905">
    <property type="entry name" value="Secretory_peroxidase"/>
</dbReference>
<dbReference type="PANTHER" id="PTHR31517">
    <property type="match status" value="1"/>
</dbReference>
<dbReference type="PANTHER" id="PTHR31517:SF59">
    <property type="entry name" value="PEROXIDASE"/>
    <property type="match status" value="1"/>
</dbReference>
<dbReference type="Pfam" id="PF00141">
    <property type="entry name" value="peroxidase"/>
    <property type="match status" value="1"/>
</dbReference>
<dbReference type="PRINTS" id="PR00458">
    <property type="entry name" value="PEROXIDASE"/>
</dbReference>
<dbReference type="PRINTS" id="PR00461">
    <property type="entry name" value="PLPEROXIDASE"/>
</dbReference>
<dbReference type="SUPFAM" id="SSF48113">
    <property type="entry name" value="Heme-dependent peroxidases"/>
    <property type="match status" value="1"/>
</dbReference>
<dbReference type="PROSITE" id="PS00435">
    <property type="entry name" value="PEROXIDASE_1"/>
    <property type="match status" value="1"/>
</dbReference>
<dbReference type="PROSITE" id="PS00436">
    <property type="entry name" value="PEROXIDASE_2"/>
    <property type="match status" value="1"/>
</dbReference>
<dbReference type="PROSITE" id="PS50873">
    <property type="entry name" value="PEROXIDASE_4"/>
    <property type="match status" value="1"/>
</dbReference>
<name>PER19_ARATH</name>
<sequence>MHVISLSLSSIFFFLFLTSTILISPVQPTTSKPPAPRPHRELSADYYSKKCPQLETLVGSVTSQRFKEVPISAPATIRLFFHDCFVEGCDGSILIETKKGSKKLAEREAYENKELREEGFDSIIKAKALVESHCPSLVSCSDILAIAARDFIHLAGGPYYQVKKGRWDGKRSTAKNVPPNIPRSNSTVDQLIKLFASKGLTVEELVVLSGSHTIGFAHCKNFLGRLYDYKGTKRPDPSLDQRLLKELRMSCPFSGGSSGVVLPLDATTPFVFDNGYFTGLGTNMGLLGSDQALFLDPRTKPIALEMARDKQKFLKAFGDAMDKMGSIGVKRGKRHGEIRTDCRVFL</sequence>
<evidence type="ECO:0000255" key="1"/>
<evidence type="ECO:0000255" key="2">
    <source>
        <dbReference type="PROSITE-ProRule" id="PRU00297"/>
    </source>
</evidence>
<evidence type="ECO:0000255" key="3">
    <source>
        <dbReference type="PROSITE-ProRule" id="PRU10012"/>
    </source>
</evidence>
<proteinExistence type="evidence at transcript level"/>
<keyword id="KW-0106">Calcium</keyword>
<keyword id="KW-1015">Disulfide bond</keyword>
<keyword id="KW-0325">Glycoprotein</keyword>
<keyword id="KW-0349">Heme</keyword>
<keyword id="KW-0376">Hydrogen peroxide</keyword>
<keyword id="KW-0408">Iron</keyword>
<keyword id="KW-0479">Metal-binding</keyword>
<keyword id="KW-0560">Oxidoreductase</keyword>
<keyword id="KW-0575">Peroxidase</keyword>
<keyword id="KW-1185">Reference proteome</keyword>
<keyword id="KW-0964">Secreted</keyword>
<keyword id="KW-0732">Signal</keyword>